<gene>
    <name evidence="1" type="primary">gcvH</name>
    <name type="ordered locus">A2cp1_2715</name>
</gene>
<reference key="1">
    <citation type="submission" date="2009-01" db="EMBL/GenBank/DDBJ databases">
        <title>Complete sequence of Anaeromyxobacter dehalogenans 2CP-1.</title>
        <authorList>
            <person name="Lucas S."/>
            <person name="Copeland A."/>
            <person name="Lapidus A."/>
            <person name="Glavina del Rio T."/>
            <person name="Dalin E."/>
            <person name="Tice H."/>
            <person name="Bruce D."/>
            <person name="Goodwin L."/>
            <person name="Pitluck S."/>
            <person name="Saunders E."/>
            <person name="Brettin T."/>
            <person name="Detter J.C."/>
            <person name="Han C."/>
            <person name="Larimer F."/>
            <person name="Land M."/>
            <person name="Hauser L."/>
            <person name="Kyrpides N."/>
            <person name="Ovchinnikova G."/>
            <person name="Beliaev A.S."/>
            <person name="Richardson P."/>
        </authorList>
    </citation>
    <scope>NUCLEOTIDE SEQUENCE [LARGE SCALE GENOMIC DNA]</scope>
    <source>
        <strain>2CP-1 / ATCC BAA-258</strain>
    </source>
</reference>
<name>GCSH_ANAD2</name>
<comment type="function">
    <text evidence="1">The glycine cleavage system catalyzes the degradation of glycine. The H protein shuttles the methylamine group of glycine from the P protein to the T protein.</text>
</comment>
<comment type="cofactor">
    <cofactor evidence="1">
        <name>(R)-lipoate</name>
        <dbReference type="ChEBI" id="CHEBI:83088"/>
    </cofactor>
    <text evidence="1">Binds 1 lipoyl cofactor covalently.</text>
</comment>
<comment type="subunit">
    <text evidence="1">The glycine cleavage system is composed of four proteins: P, T, L and H.</text>
</comment>
<comment type="similarity">
    <text evidence="1">Belongs to the GcvH family.</text>
</comment>
<evidence type="ECO:0000255" key="1">
    <source>
        <dbReference type="HAMAP-Rule" id="MF_00272"/>
    </source>
</evidence>
<evidence type="ECO:0000255" key="2">
    <source>
        <dbReference type="PROSITE-ProRule" id="PRU01066"/>
    </source>
</evidence>
<protein>
    <recommendedName>
        <fullName evidence="1">Glycine cleavage system H protein</fullName>
    </recommendedName>
</protein>
<proteinExistence type="inferred from homology"/>
<accession>B8JDY7</accession>
<organism>
    <name type="scientific">Anaeromyxobacter dehalogenans (strain 2CP-1 / ATCC BAA-258)</name>
    <dbReference type="NCBI Taxonomy" id="455488"/>
    <lineage>
        <taxon>Bacteria</taxon>
        <taxon>Pseudomonadati</taxon>
        <taxon>Myxococcota</taxon>
        <taxon>Myxococcia</taxon>
        <taxon>Myxococcales</taxon>
        <taxon>Cystobacterineae</taxon>
        <taxon>Anaeromyxobacteraceae</taxon>
        <taxon>Anaeromyxobacter</taxon>
    </lineage>
</organism>
<dbReference type="EMBL" id="CP001359">
    <property type="protein sequence ID" value="ACL66052.1"/>
    <property type="molecule type" value="Genomic_DNA"/>
</dbReference>
<dbReference type="RefSeq" id="WP_012526628.1">
    <property type="nucleotide sequence ID" value="NC_011891.1"/>
</dbReference>
<dbReference type="SMR" id="B8JDY7"/>
<dbReference type="KEGG" id="acp:A2cp1_2715"/>
<dbReference type="HOGENOM" id="CLU_097408_2_2_7"/>
<dbReference type="Proteomes" id="UP000007089">
    <property type="component" value="Chromosome"/>
</dbReference>
<dbReference type="GO" id="GO:0005829">
    <property type="term" value="C:cytosol"/>
    <property type="evidence" value="ECO:0007669"/>
    <property type="project" value="TreeGrafter"/>
</dbReference>
<dbReference type="GO" id="GO:0005960">
    <property type="term" value="C:glycine cleavage complex"/>
    <property type="evidence" value="ECO:0007669"/>
    <property type="project" value="InterPro"/>
</dbReference>
<dbReference type="GO" id="GO:0019464">
    <property type="term" value="P:glycine decarboxylation via glycine cleavage system"/>
    <property type="evidence" value="ECO:0007669"/>
    <property type="project" value="UniProtKB-UniRule"/>
</dbReference>
<dbReference type="CDD" id="cd06848">
    <property type="entry name" value="GCS_H"/>
    <property type="match status" value="1"/>
</dbReference>
<dbReference type="Gene3D" id="2.40.50.100">
    <property type="match status" value="1"/>
</dbReference>
<dbReference type="HAMAP" id="MF_00272">
    <property type="entry name" value="GcvH"/>
    <property type="match status" value="1"/>
</dbReference>
<dbReference type="InterPro" id="IPR003016">
    <property type="entry name" value="2-oxoA_DH_lipoyl-BS"/>
</dbReference>
<dbReference type="InterPro" id="IPR000089">
    <property type="entry name" value="Biotin_lipoyl"/>
</dbReference>
<dbReference type="InterPro" id="IPR002930">
    <property type="entry name" value="GCV_H"/>
</dbReference>
<dbReference type="InterPro" id="IPR033753">
    <property type="entry name" value="GCV_H/Fam206"/>
</dbReference>
<dbReference type="InterPro" id="IPR017453">
    <property type="entry name" value="GCV_H_sub"/>
</dbReference>
<dbReference type="InterPro" id="IPR011053">
    <property type="entry name" value="Single_hybrid_motif"/>
</dbReference>
<dbReference type="NCBIfam" id="TIGR00527">
    <property type="entry name" value="gcvH"/>
    <property type="match status" value="1"/>
</dbReference>
<dbReference type="NCBIfam" id="NF002270">
    <property type="entry name" value="PRK01202.1"/>
    <property type="match status" value="1"/>
</dbReference>
<dbReference type="PANTHER" id="PTHR11715">
    <property type="entry name" value="GLYCINE CLEAVAGE SYSTEM H PROTEIN"/>
    <property type="match status" value="1"/>
</dbReference>
<dbReference type="PANTHER" id="PTHR11715:SF3">
    <property type="entry name" value="GLYCINE CLEAVAGE SYSTEM H PROTEIN-RELATED"/>
    <property type="match status" value="1"/>
</dbReference>
<dbReference type="Pfam" id="PF01597">
    <property type="entry name" value="GCV_H"/>
    <property type="match status" value="1"/>
</dbReference>
<dbReference type="SUPFAM" id="SSF51230">
    <property type="entry name" value="Single hybrid motif"/>
    <property type="match status" value="1"/>
</dbReference>
<dbReference type="PROSITE" id="PS50968">
    <property type="entry name" value="BIOTINYL_LIPOYL"/>
    <property type="match status" value="1"/>
</dbReference>
<dbReference type="PROSITE" id="PS00189">
    <property type="entry name" value="LIPOYL"/>
    <property type="match status" value="1"/>
</dbReference>
<keyword id="KW-0450">Lipoyl</keyword>
<sequence length="128" mass="14229">MEIPEDLRYTREHEWARRKGSAIVVGITDFAQQQLGDVVYVELPDVGDPVKKGESFGVVESTKAVSELFAPISGKVIEVNDPLSDAPETINEDPYEEGWMITIEPSDPKDLEALMDAAAYKAFVEEQE</sequence>
<feature type="chain" id="PRO_1000190188" description="Glycine cleavage system H protein">
    <location>
        <begin position="1"/>
        <end position="128"/>
    </location>
</feature>
<feature type="domain" description="Lipoyl-binding" evidence="2">
    <location>
        <begin position="22"/>
        <end position="104"/>
    </location>
</feature>
<feature type="modified residue" description="N6-lipoyllysine" evidence="1">
    <location>
        <position position="63"/>
    </location>
</feature>